<protein>
    <recommendedName>
        <fullName>Serine/threonine-protein kinase Nek6</fullName>
        <ecNumber>2.7.11.34</ecNumber>
    </recommendedName>
    <alternativeName>
        <fullName>NimA-related protein kinase 6</fullName>
        <shortName>AtNek6</shortName>
    </alternativeName>
</protein>
<sequence>MDDYEVVEQIGRGAFGSAFLVIHKSERRKYVVKKIRLAKQTERCKLAAIQEMSLISKLKSPYIVEYKDSWVEKDCVCIVTSYCEGGDMTQMIKKSRGVFASEEKLCRWMVQLLLAIDYLHNNRVLHRDLKCSNIFLTKENEVRLGDFGLAKLLGKDDLASSMVGTPNYMCPELLADIPYGYKSDIWSLGCCMFEVAAHQPAFKAPDMAALINKINRSSLSPLPVMYSSSLKRLIKSMLRKNPEHRPTAAELLRHPHLQPYLAQCQNLSPVFKPVVSKSEHNTNENRTGLPPKTKSAKTPIKHNQESEETEKKNKDTSSSSKDKERPAKSQEMSVISTLTLLREFQKKSPKSEERAEALESLLELCAGLLRQEKFDELEGVLKPFGDETVSSRETAIWLTKSLMNVKRKQNDDETNI</sequence>
<feature type="chain" id="PRO_0000314042" description="Serine/threonine-protein kinase Nek6">
    <location>
        <begin position="1"/>
        <end position="416"/>
    </location>
</feature>
<feature type="domain" description="Protein kinase" evidence="1">
    <location>
        <begin position="4"/>
        <end position="257"/>
    </location>
</feature>
<feature type="region of interest" description="Disordered" evidence="3">
    <location>
        <begin position="277"/>
        <end position="334"/>
    </location>
</feature>
<feature type="compositionally biased region" description="Basic and acidic residues" evidence="3">
    <location>
        <begin position="302"/>
        <end position="328"/>
    </location>
</feature>
<feature type="active site" description="Proton acceptor" evidence="1 2">
    <location>
        <position position="128"/>
    </location>
</feature>
<feature type="binding site" evidence="1">
    <location>
        <begin position="10"/>
        <end position="18"/>
    </location>
    <ligand>
        <name>ATP</name>
        <dbReference type="ChEBI" id="CHEBI:30616"/>
    </ligand>
</feature>
<feature type="binding site" evidence="1">
    <location>
        <position position="33"/>
    </location>
    <ligand>
        <name>ATP</name>
        <dbReference type="ChEBI" id="CHEBI:30616"/>
    </ligand>
</feature>
<proteinExistence type="inferred from homology"/>
<organism>
    <name type="scientific">Arabidopsis thaliana</name>
    <name type="common">Mouse-ear cress</name>
    <dbReference type="NCBI Taxonomy" id="3702"/>
    <lineage>
        <taxon>Eukaryota</taxon>
        <taxon>Viridiplantae</taxon>
        <taxon>Streptophyta</taxon>
        <taxon>Embryophyta</taxon>
        <taxon>Tracheophyta</taxon>
        <taxon>Spermatophyta</taxon>
        <taxon>Magnoliopsida</taxon>
        <taxon>eudicotyledons</taxon>
        <taxon>Gunneridae</taxon>
        <taxon>Pentapetalae</taxon>
        <taxon>rosids</taxon>
        <taxon>malvids</taxon>
        <taxon>Brassicales</taxon>
        <taxon>Brassicaceae</taxon>
        <taxon>Camelineae</taxon>
        <taxon>Arabidopsis</taxon>
    </lineage>
</organism>
<accession>Q9LT35</accession>
<accession>F4JEU3</accession>
<name>NEK6_ARATH</name>
<reference key="1">
    <citation type="journal article" date="2000" name="DNA Res.">
        <title>Structural analysis of Arabidopsis thaliana chromosome 3. I. Sequence features of the regions of 4,504,864 bp covered by sixty P1 and TAC clones.</title>
        <authorList>
            <person name="Sato S."/>
            <person name="Nakamura Y."/>
            <person name="Kaneko T."/>
            <person name="Katoh T."/>
            <person name="Asamizu E."/>
            <person name="Tabata S."/>
        </authorList>
    </citation>
    <scope>NUCLEOTIDE SEQUENCE [LARGE SCALE GENOMIC DNA]</scope>
    <source>
        <strain>cv. Columbia</strain>
    </source>
</reference>
<reference key="2">
    <citation type="journal article" date="2017" name="Plant J.">
        <title>Araport11: a complete reannotation of the Arabidopsis thaliana reference genome.</title>
        <authorList>
            <person name="Cheng C.Y."/>
            <person name="Krishnakumar V."/>
            <person name="Chan A.P."/>
            <person name="Thibaud-Nissen F."/>
            <person name="Schobel S."/>
            <person name="Town C.D."/>
        </authorList>
    </citation>
    <scope>GENOME REANNOTATION</scope>
    <source>
        <strain>cv. Columbia</strain>
    </source>
</reference>
<reference key="3">
    <citation type="journal article" date="2007" name="Plant J.">
        <title>Members of the plant NIMA-related kinases are involved in organ development and vascularization in poplar, Arabidopsis and rice.</title>
        <authorList>
            <person name="Vigneault F."/>
            <person name="Lachance D."/>
            <person name="Cloutier M."/>
            <person name="Pelletier G."/>
            <person name="Levasseur C."/>
            <person name="Seguin A."/>
        </authorList>
    </citation>
    <scope>GENE FAMILY</scope>
    <scope>NOMENCLATURE</scope>
</reference>
<evidence type="ECO:0000255" key="1">
    <source>
        <dbReference type="PROSITE-ProRule" id="PRU00159"/>
    </source>
</evidence>
<evidence type="ECO:0000255" key="2">
    <source>
        <dbReference type="PROSITE-ProRule" id="PRU10027"/>
    </source>
</evidence>
<evidence type="ECO:0000256" key="3">
    <source>
        <dbReference type="SAM" id="MobiDB-lite"/>
    </source>
</evidence>
<evidence type="ECO:0000305" key="4"/>
<gene>
    <name type="primary">NEK6</name>
    <name type="ordered locus">At3g20860</name>
    <name type="ORF">MOE17.17</name>
</gene>
<comment type="function">
    <text>May be involved in plant development processes.</text>
</comment>
<comment type="catalytic activity">
    <reaction>
        <text>L-seryl-[protein] + ATP = O-phospho-L-seryl-[protein] + ADP + H(+)</text>
        <dbReference type="Rhea" id="RHEA:17989"/>
        <dbReference type="Rhea" id="RHEA-COMP:9863"/>
        <dbReference type="Rhea" id="RHEA-COMP:11604"/>
        <dbReference type="ChEBI" id="CHEBI:15378"/>
        <dbReference type="ChEBI" id="CHEBI:29999"/>
        <dbReference type="ChEBI" id="CHEBI:30616"/>
        <dbReference type="ChEBI" id="CHEBI:83421"/>
        <dbReference type="ChEBI" id="CHEBI:456216"/>
        <dbReference type="EC" id="2.7.11.34"/>
    </reaction>
</comment>
<comment type="catalytic activity">
    <reaction>
        <text>L-threonyl-[protein] + ATP = O-phospho-L-threonyl-[protein] + ADP + H(+)</text>
        <dbReference type="Rhea" id="RHEA:46608"/>
        <dbReference type="Rhea" id="RHEA-COMP:11060"/>
        <dbReference type="Rhea" id="RHEA-COMP:11605"/>
        <dbReference type="ChEBI" id="CHEBI:15378"/>
        <dbReference type="ChEBI" id="CHEBI:30013"/>
        <dbReference type="ChEBI" id="CHEBI:30616"/>
        <dbReference type="ChEBI" id="CHEBI:61977"/>
        <dbReference type="ChEBI" id="CHEBI:456216"/>
        <dbReference type="EC" id="2.7.11.34"/>
    </reaction>
</comment>
<comment type="similarity">
    <text evidence="4">Belongs to the protein kinase superfamily. NEK Ser/Thr protein kinase family. NIMA subfamily.</text>
</comment>
<keyword id="KW-0067">ATP-binding</keyword>
<keyword id="KW-0418">Kinase</keyword>
<keyword id="KW-0547">Nucleotide-binding</keyword>
<keyword id="KW-1185">Reference proteome</keyword>
<keyword id="KW-0723">Serine/threonine-protein kinase</keyword>
<keyword id="KW-0808">Transferase</keyword>
<dbReference type="EC" id="2.7.11.34"/>
<dbReference type="EMBL" id="AB025629">
    <property type="protein sequence ID" value="BAB02494.1"/>
    <property type="molecule type" value="Genomic_DNA"/>
</dbReference>
<dbReference type="EMBL" id="CP002686">
    <property type="protein sequence ID" value="AEE76432.2"/>
    <property type="molecule type" value="Genomic_DNA"/>
</dbReference>
<dbReference type="RefSeq" id="NP_188722.2">
    <property type="nucleotide sequence ID" value="NM_112977.2"/>
</dbReference>
<dbReference type="SMR" id="Q9LT35"/>
<dbReference type="BioGRID" id="6966">
    <property type="interactions" value="1"/>
</dbReference>
<dbReference type="FunCoup" id="Q9LT35">
    <property type="interactions" value="1211"/>
</dbReference>
<dbReference type="STRING" id="3702.Q9LT35"/>
<dbReference type="iPTMnet" id="Q9LT35"/>
<dbReference type="PaxDb" id="3702-AT3G20860.1"/>
<dbReference type="ProteomicsDB" id="238238"/>
<dbReference type="EnsemblPlants" id="AT3G20860.1">
    <property type="protein sequence ID" value="AT3G20860.1"/>
    <property type="gene ID" value="AT3G20860"/>
</dbReference>
<dbReference type="GeneID" id="821634"/>
<dbReference type="Gramene" id="AT3G20860.1">
    <property type="protein sequence ID" value="AT3G20860.1"/>
    <property type="gene ID" value="AT3G20860"/>
</dbReference>
<dbReference type="KEGG" id="ath:AT3G20860"/>
<dbReference type="Araport" id="AT3G20860"/>
<dbReference type="TAIR" id="AT3G20860">
    <property type="gene designation" value="NEK5"/>
</dbReference>
<dbReference type="eggNOG" id="KOG0589">
    <property type="taxonomic scope" value="Eukaryota"/>
</dbReference>
<dbReference type="HOGENOM" id="CLU_000288_128_3_1"/>
<dbReference type="InParanoid" id="Q9LT35"/>
<dbReference type="OMA" id="CAVEISK"/>
<dbReference type="OrthoDB" id="248923at2759"/>
<dbReference type="PhylomeDB" id="Q9LT35"/>
<dbReference type="PRO" id="PR:Q9LT35"/>
<dbReference type="Proteomes" id="UP000006548">
    <property type="component" value="Chromosome 3"/>
</dbReference>
<dbReference type="ExpressionAtlas" id="Q9LT35">
    <property type="expression patterns" value="baseline and differential"/>
</dbReference>
<dbReference type="GO" id="GO:0005524">
    <property type="term" value="F:ATP binding"/>
    <property type="evidence" value="ECO:0007669"/>
    <property type="project" value="UniProtKB-KW"/>
</dbReference>
<dbReference type="GO" id="GO:0106310">
    <property type="term" value="F:protein serine kinase activity"/>
    <property type="evidence" value="ECO:0007669"/>
    <property type="project" value="RHEA"/>
</dbReference>
<dbReference type="GO" id="GO:0004674">
    <property type="term" value="F:protein serine/threonine kinase activity"/>
    <property type="evidence" value="ECO:0007669"/>
    <property type="project" value="UniProtKB-KW"/>
</dbReference>
<dbReference type="GO" id="GO:0043622">
    <property type="term" value="P:cortical microtubule organization"/>
    <property type="evidence" value="ECO:0000315"/>
    <property type="project" value="CACAO"/>
</dbReference>
<dbReference type="GO" id="GO:0010311">
    <property type="term" value="P:lateral root formation"/>
    <property type="evidence" value="ECO:0000315"/>
    <property type="project" value="CACAO"/>
</dbReference>
<dbReference type="GO" id="GO:0010366">
    <property type="term" value="P:negative regulation of ethylene biosynthetic process"/>
    <property type="evidence" value="ECO:0000315"/>
    <property type="project" value="CACAO"/>
</dbReference>
<dbReference type="GO" id="GO:0006468">
    <property type="term" value="P:protein phosphorylation"/>
    <property type="evidence" value="ECO:0000314"/>
    <property type="project" value="CACAO"/>
</dbReference>
<dbReference type="CDD" id="cd08215">
    <property type="entry name" value="STKc_Nek"/>
    <property type="match status" value="1"/>
</dbReference>
<dbReference type="FunFam" id="3.30.200.20:FF:000097">
    <property type="entry name" value="Probable serine/threonine-protein kinase nek1"/>
    <property type="match status" value="1"/>
</dbReference>
<dbReference type="FunFam" id="1.10.510.10:FF:000788">
    <property type="entry name" value="Serine/threonine-protein kinase Nek3"/>
    <property type="match status" value="1"/>
</dbReference>
<dbReference type="Gene3D" id="3.30.200.20">
    <property type="entry name" value="Phosphorylase Kinase, domain 1"/>
    <property type="match status" value="1"/>
</dbReference>
<dbReference type="Gene3D" id="1.10.510.10">
    <property type="entry name" value="Transferase(Phosphotransferase) domain 1"/>
    <property type="match status" value="1"/>
</dbReference>
<dbReference type="InterPro" id="IPR011009">
    <property type="entry name" value="Kinase-like_dom_sf"/>
</dbReference>
<dbReference type="InterPro" id="IPR050660">
    <property type="entry name" value="NEK_Ser/Thr_kinase"/>
</dbReference>
<dbReference type="InterPro" id="IPR000719">
    <property type="entry name" value="Prot_kinase_dom"/>
</dbReference>
<dbReference type="InterPro" id="IPR017441">
    <property type="entry name" value="Protein_kinase_ATP_BS"/>
</dbReference>
<dbReference type="InterPro" id="IPR008271">
    <property type="entry name" value="Ser/Thr_kinase_AS"/>
</dbReference>
<dbReference type="PANTHER" id="PTHR43671">
    <property type="entry name" value="SERINE/THREONINE-PROTEIN KINASE NEK"/>
    <property type="match status" value="1"/>
</dbReference>
<dbReference type="PANTHER" id="PTHR43671:SF94">
    <property type="entry name" value="SERINE_THREONINE-PROTEIN KINASE NEK6"/>
    <property type="match status" value="1"/>
</dbReference>
<dbReference type="Pfam" id="PF00069">
    <property type="entry name" value="Pkinase"/>
    <property type="match status" value="1"/>
</dbReference>
<dbReference type="SMART" id="SM00220">
    <property type="entry name" value="S_TKc"/>
    <property type="match status" value="1"/>
</dbReference>
<dbReference type="SUPFAM" id="SSF56112">
    <property type="entry name" value="Protein kinase-like (PK-like)"/>
    <property type="match status" value="1"/>
</dbReference>
<dbReference type="PROSITE" id="PS00107">
    <property type="entry name" value="PROTEIN_KINASE_ATP"/>
    <property type="match status" value="1"/>
</dbReference>
<dbReference type="PROSITE" id="PS50011">
    <property type="entry name" value="PROTEIN_KINASE_DOM"/>
    <property type="match status" value="1"/>
</dbReference>
<dbReference type="PROSITE" id="PS00108">
    <property type="entry name" value="PROTEIN_KINASE_ST"/>
    <property type="match status" value="1"/>
</dbReference>